<feature type="chain" id="PRO_0000369444" description="Non-structural protein 3">
    <location>
        <begin position="1"/>
        <end position="313"/>
    </location>
</feature>
<feature type="region of interest" description="RNA-binding" evidence="1">
    <location>
        <begin position="1"/>
        <end position="149"/>
    </location>
</feature>
<feature type="region of interest" description="Dimerization" evidence="1">
    <location>
        <begin position="150"/>
        <end position="206"/>
    </location>
</feature>
<feature type="region of interest" description="Interaction with host ZC3H7B" evidence="1">
    <location>
        <begin position="170"/>
        <end position="234"/>
    </location>
</feature>
<feature type="region of interest" description="Interaction with host EIF4G1" evidence="1">
    <location>
        <begin position="208"/>
        <end position="313"/>
    </location>
</feature>
<feature type="coiled-coil region" evidence="1">
    <location>
        <begin position="166"/>
        <end position="237"/>
    </location>
</feature>
<feature type="sequence conflict" description="In Ref. 2; ABV53302." ref="2">
    <original>I</original>
    <variation>S</variation>
    <location>
        <position position="12"/>
    </location>
</feature>
<feature type="sequence conflict" description="In Ref. 2; ABV53302." ref="2">
    <original>R</original>
    <variation>C</variation>
    <location>
        <position position="227"/>
    </location>
</feature>
<keyword id="KW-0175">Coiled coil</keyword>
<keyword id="KW-1035">Host cytoplasm</keyword>
<keyword id="KW-0945">Host-virus interaction</keyword>
<keyword id="KW-0694">RNA-binding</keyword>
<keyword id="KW-0810">Translation regulation</keyword>
<organism>
    <name type="scientific">Rotavirus A (isolate RVA/Human/United States/WI61/1983/G9P1A[8])</name>
    <name type="common">RV-A</name>
    <dbReference type="NCBI Taxonomy" id="578830"/>
    <lineage>
        <taxon>Viruses</taxon>
        <taxon>Riboviria</taxon>
        <taxon>Orthornavirae</taxon>
        <taxon>Duplornaviricota</taxon>
        <taxon>Resentoviricetes</taxon>
        <taxon>Reovirales</taxon>
        <taxon>Sedoreoviridae</taxon>
        <taxon>Rotavirus</taxon>
        <taxon>Rotavirus A</taxon>
    </lineage>
</organism>
<dbReference type="EMBL" id="X81437">
    <property type="protein sequence ID" value="CAA57196.1"/>
    <property type="molecule type" value="mRNA"/>
</dbReference>
<dbReference type="EMBL" id="EF672621">
    <property type="protein sequence ID" value="ABV53302.1"/>
    <property type="molecule type" value="Genomic_RNA"/>
</dbReference>
<dbReference type="PIR" id="S51726">
    <property type="entry name" value="S51726"/>
</dbReference>
<dbReference type="SMR" id="Q82049"/>
<dbReference type="Proteomes" id="UP000006580">
    <property type="component" value="Genome"/>
</dbReference>
<dbReference type="GO" id="GO:0030430">
    <property type="term" value="C:host cell cytoplasm"/>
    <property type="evidence" value="ECO:0007669"/>
    <property type="project" value="UniProtKB-SubCell"/>
</dbReference>
<dbReference type="GO" id="GO:0003723">
    <property type="term" value="F:RNA binding"/>
    <property type="evidence" value="ECO:0007669"/>
    <property type="project" value="UniProtKB-UniRule"/>
</dbReference>
<dbReference type="GO" id="GO:0006417">
    <property type="term" value="P:regulation of translation"/>
    <property type="evidence" value="ECO:0007669"/>
    <property type="project" value="UniProtKB-UniRule"/>
</dbReference>
<dbReference type="CDD" id="cd20714">
    <property type="entry name" value="NSP3_rotavirus"/>
    <property type="match status" value="1"/>
</dbReference>
<dbReference type="Gene3D" id="3.30.70.1610">
    <property type="match status" value="1"/>
</dbReference>
<dbReference type="Gene3D" id="1.20.5.970">
    <property type="entry name" value="Nonstructural RNA-binding protein"/>
    <property type="match status" value="1"/>
</dbReference>
<dbReference type="Gene3D" id="6.10.280.20">
    <property type="entry name" value="Rotavirus non-structural protein NSP3, N-terminal domain"/>
    <property type="match status" value="1"/>
</dbReference>
<dbReference type="HAMAP" id="MF_04094">
    <property type="entry name" value="ROTA_A_NSP3"/>
    <property type="match status" value="1"/>
</dbReference>
<dbReference type="HAMAP" id="MF_04090">
    <property type="entry name" value="ROTA_NSP3"/>
    <property type="match status" value="1"/>
</dbReference>
<dbReference type="InterPro" id="IPR042519">
    <property type="entry name" value="NSP3_N_rotavirus"/>
</dbReference>
<dbReference type="InterPro" id="IPR036082">
    <property type="entry name" value="NSP3_sf"/>
</dbReference>
<dbReference type="InterPro" id="IPR002873">
    <property type="entry name" value="Rotavirus_NSP3"/>
</dbReference>
<dbReference type="Pfam" id="PF01665">
    <property type="entry name" value="Rota_NSP3"/>
    <property type="match status" value="1"/>
</dbReference>
<dbReference type="SUPFAM" id="SSF69903">
    <property type="entry name" value="NSP3 homodimer"/>
    <property type="match status" value="1"/>
</dbReference>
<dbReference type="SUPFAM" id="SSF58030">
    <property type="entry name" value="Rotavirus nonstructural proteins"/>
    <property type="match status" value="1"/>
</dbReference>
<accession>Q82049</accession>
<accession>B3SRX7</accession>
<organismHost>
    <name type="scientific">Homo sapiens</name>
    <name type="common">Human</name>
    <dbReference type="NCBI Taxonomy" id="9606"/>
</organismHost>
<reference key="1">
    <citation type="journal article" date="1995" name="Virology">
        <title>Comparative nucleotide and amino acid sequence analysis of the sequence-specific RNA-binding rotavirus nonstructural protein NSP3.</title>
        <authorList>
            <person name="Rao C.D."/>
            <person name="Das M."/>
            <person name="Ilango P."/>
            <person name="Lalwani R."/>
            <person name="Rao B.S."/>
            <person name="Gowda K."/>
        </authorList>
    </citation>
    <scope>NUCLEOTIDE SEQUENCE [MRNA]</scope>
</reference>
<reference key="2">
    <citation type="journal article" date="2008" name="J. Virol.">
        <title>Group A human rotavirus genomics: evidence that gene constellations are influenced by viral protein interactions.</title>
        <authorList>
            <person name="Heiman E.M."/>
            <person name="McDonald S.M."/>
            <person name="Barro M."/>
            <person name="Taraporewala Z.F."/>
            <person name="Bar-Magen T."/>
            <person name="Patton J.T."/>
        </authorList>
    </citation>
    <scope>NUCLEOTIDE SEQUENCE [GENOMIC RNA] OF 3-313</scope>
</reference>
<sequence length="313" mass="36376">MLKMESTQQMVISVINTSFEAAVVAATSTLELMGIQYDYNEVFTRVKSKFDYVMDDSGVKNNLLGKAITIDQALNGKLGSAIRNRNWMTDSKTVAKLDEDVNKLRMILSSKGIDQKMRVLNACFSVKRIPGKSSSIIKCTRLMKDKIERGEVEVDDSYVDEKMEIDTIDWKFRYDQLEKRFESLKQRVNEKYNTWVQKAKKVNENMYSLQNVISQQQNQIADLQQYRNKLETDLQGKFSSLVSSVEWYLRSMELPDDVKTDIEQQLNSIDLINSINAIDDIESLIRNLIQDYDRTFLMLKGLLKQCNYEYTYE</sequence>
<evidence type="ECO:0000255" key="1">
    <source>
        <dbReference type="HAMAP-Rule" id="MF_04094"/>
    </source>
</evidence>
<proteinExistence type="evidence at transcript level"/>
<protein>
    <recommendedName>
        <fullName evidence="1">Non-structural protein 3</fullName>
        <shortName evidence="1">NSP3</shortName>
    </recommendedName>
    <alternativeName>
        <fullName evidence="1">NCVP4</fullName>
    </alternativeName>
    <alternativeName>
        <fullName evidence="1">Non-structural RNA-binding protein 34</fullName>
        <shortName evidence="1">NS34</shortName>
    </alternativeName>
</protein>
<comment type="function">
    <text evidence="1">Plays an important role in stimulating the translation of viral mRNAs. These mRNAs are capped but not polyadenylated, instead terminating in a conserved sequence 'GACC' at the 3' that is recognized by NSP3, which competes with host PABPC1 for EIF4G1 binding. The interaction between NSP3 and host EIF4G1 stabilizes the EIF4E-EIF4G1 interaction, thereby facilitating the initiation of capped mRNA translation.</text>
</comment>
<comment type="subunit">
    <text evidence="1">Homodimer. Interacts (via the coiled-coil region) with host ZC3H7B (via LD motif). Interacts with host EIF4G1.</text>
</comment>
<comment type="subcellular location">
    <subcellularLocation>
        <location evidence="1">Host cytoplasm</location>
    </subcellularLocation>
</comment>
<comment type="similarity">
    <text evidence="1">Belongs to the rotavirus NSP3 family.</text>
</comment>
<name>NSP3_ROTWI</name>